<dbReference type="EC" id="2.7.4.9" evidence="1"/>
<dbReference type="EMBL" id="CP000848">
    <property type="protein sequence ID" value="ABV76635.1"/>
    <property type="molecule type" value="Genomic_DNA"/>
</dbReference>
<dbReference type="RefSeq" id="WP_012151189.1">
    <property type="nucleotide sequence ID" value="NZ_CP121767.1"/>
</dbReference>
<dbReference type="SMR" id="A8GTB0"/>
<dbReference type="GeneID" id="79937707"/>
<dbReference type="KEGG" id="rri:A1G_05815"/>
<dbReference type="HOGENOM" id="CLU_049131_0_2_5"/>
<dbReference type="Proteomes" id="UP000006832">
    <property type="component" value="Chromosome"/>
</dbReference>
<dbReference type="GO" id="GO:0005829">
    <property type="term" value="C:cytosol"/>
    <property type="evidence" value="ECO:0007669"/>
    <property type="project" value="TreeGrafter"/>
</dbReference>
<dbReference type="GO" id="GO:0005524">
    <property type="term" value="F:ATP binding"/>
    <property type="evidence" value="ECO:0007669"/>
    <property type="project" value="UniProtKB-UniRule"/>
</dbReference>
<dbReference type="GO" id="GO:0004798">
    <property type="term" value="F:dTMP kinase activity"/>
    <property type="evidence" value="ECO:0007669"/>
    <property type="project" value="UniProtKB-UniRule"/>
</dbReference>
<dbReference type="GO" id="GO:0006233">
    <property type="term" value="P:dTDP biosynthetic process"/>
    <property type="evidence" value="ECO:0007669"/>
    <property type="project" value="InterPro"/>
</dbReference>
<dbReference type="GO" id="GO:0006235">
    <property type="term" value="P:dTTP biosynthetic process"/>
    <property type="evidence" value="ECO:0007669"/>
    <property type="project" value="UniProtKB-UniRule"/>
</dbReference>
<dbReference type="GO" id="GO:0006227">
    <property type="term" value="P:dUDP biosynthetic process"/>
    <property type="evidence" value="ECO:0007669"/>
    <property type="project" value="TreeGrafter"/>
</dbReference>
<dbReference type="CDD" id="cd01672">
    <property type="entry name" value="TMPK"/>
    <property type="match status" value="1"/>
</dbReference>
<dbReference type="FunFam" id="3.40.50.300:FF:000225">
    <property type="entry name" value="Thymidylate kinase"/>
    <property type="match status" value="1"/>
</dbReference>
<dbReference type="Gene3D" id="3.40.50.300">
    <property type="entry name" value="P-loop containing nucleotide triphosphate hydrolases"/>
    <property type="match status" value="1"/>
</dbReference>
<dbReference type="HAMAP" id="MF_00165">
    <property type="entry name" value="Thymidylate_kinase"/>
    <property type="match status" value="1"/>
</dbReference>
<dbReference type="InterPro" id="IPR027417">
    <property type="entry name" value="P-loop_NTPase"/>
</dbReference>
<dbReference type="InterPro" id="IPR039430">
    <property type="entry name" value="Thymidylate_kin-like_dom"/>
</dbReference>
<dbReference type="InterPro" id="IPR018095">
    <property type="entry name" value="Thymidylate_kin_CS"/>
</dbReference>
<dbReference type="InterPro" id="IPR018094">
    <property type="entry name" value="Thymidylate_kinase"/>
</dbReference>
<dbReference type="NCBIfam" id="TIGR00041">
    <property type="entry name" value="DTMP_kinase"/>
    <property type="match status" value="1"/>
</dbReference>
<dbReference type="PANTHER" id="PTHR10344">
    <property type="entry name" value="THYMIDYLATE KINASE"/>
    <property type="match status" value="1"/>
</dbReference>
<dbReference type="PANTHER" id="PTHR10344:SF4">
    <property type="entry name" value="UMP-CMP KINASE 2, MITOCHONDRIAL"/>
    <property type="match status" value="1"/>
</dbReference>
<dbReference type="Pfam" id="PF02223">
    <property type="entry name" value="Thymidylate_kin"/>
    <property type="match status" value="1"/>
</dbReference>
<dbReference type="SUPFAM" id="SSF52540">
    <property type="entry name" value="P-loop containing nucleoside triphosphate hydrolases"/>
    <property type="match status" value="1"/>
</dbReference>
<dbReference type="PROSITE" id="PS01331">
    <property type="entry name" value="THYMIDYLATE_KINASE"/>
    <property type="match status" value="1"/>
</dbReference>
<protein>
    <recommendedName>
        <fullName evidence="1">Thymidylate kinase</fullName>
        <ecNumber evidence="1">2.7.4.9</ecNumber>
    </recommendedName>
    <alternativeName>
        <fullName evidence="1">dTMP kinase</fullName>
    </alternativeName>
</protein>
<comment type="function">
    <text evidence="1">Phosphorylation of dTMP to form dTDP in both de novo and salvage pathways of dTTP synthesis.</text>
</comment>
<comment type="catalytic activity">
    <reaction evidence="1">
        <text>dTMP + ATP = dTDP + ADP</text>
        <dbReference type="Rhea" id="RHEA:13517"/>
        <dbReference type="ChEBI" id="CHEBI:30616"/>
        <dbReference type="ChEBI" id="CHEBI:58369"/>
        <dbReference type="ChEBI" id="CHEBI:63528"/>
        <dbReference type="ChEBI" id="CHEBI:456216"/>
        <dbReference type="EC" id="2.7.4.9"/>
    </reaction>
</comment>
<comment type="similarity">
    <text evidence="1">Belongs to the thymidylate kinase family.</text>
</comment>
<sequence length="203" mass="23477">MNNLKQGKFITFEGGEGIGKSTQSQMLYEYLQSQNTPVILTREVGGTIVAEKMREILVHEELLPMSELFQAMAARYDHMARKIIPALQEGHIVICDRFIDSTVCYQGLELENGIDLVYNLHKTLMPSLMPDITFFIDVEPDTAIKRVNSRNMNNKFDIRGIDFYKKIYYCFKELSNRFPERIKTIKASDLSPLEVHELIKKHL</sequence>
<proteinExistence type="inferred from homology"/>
<reference key="1">
    <citation type="submission" date="2007-09" db="EMBL/GenBank/DDBJ databases">
        <title>Complete genome sequence of Rickettsia rickettsii.</title>
        <authorList>
            <person name="Madan A."/>
            <person name="Fahey J."/>
            <person name="Helton E."/>
            <person name="Ketteman M."/>
            <person name="Madan A."/>
            <person name="Rodrigues S."/>
            <person name="Sanchez A."/>
            <person name="Dasch G."/>
            <person name="Eremeeva M."/>
        </authorList>
    </citation>
    <scope>NUCLEOTIDE SEQUENCE [LARGE SCALE GENOMIC DNA]</scope>
    <source>
        <strain>Sheila Smith</strain>
    </source>
</reference>
<accession>A8GTB0</accession>
<gene>
    <name evidence="1" type="primary">tmk</name>
    <name type="ordered locus">A1G_05815</name>
</gene>
<evidence type="ECO:0000255" key="1">
    <source>
        <dbReference type="HAMAP-Rule" id="MF_00165"/>
    </source>
</evidence>
<organism>
    <name type="scientific">Rickettsia rickettsii (strain Sheila Smith)</name>
    <dbReference type="NCBI Taxonomy" id="392021"/>
    <lineage>
        <taxon>Bacteria</taxon>
        <taxon>Pseudomonadati</taxon>
        <taxon>Pseudomonadota</taxon>
        <taxon>Alphaproteobacteria</taxon>
        <taxon>Rickettsiales</taxon>
        <taxon>Rickettsiaceae</taxon>
        <taxon>Rickettsieae</taxon>
        <taxon>Rickettsia</taxon>
        <taxon>spotted fever group</taxon>
    </lineage>
</organism>
<name>KTHY_RICRS</name>
<keyword id="KW-0067">ATP-binding</keyword>
<keyword id="KW-0418">Kinase</keyword>
<keyword id="KW-0545">Nucleotide biosynthesis</keyword>
<keyword id="KW-0547">Nucleotide-binding</keyword>
<keyword id="KW-0808">Transferase</keyword>
<feature type="chain" id="PRO_1000023271" description="Thymidylate kinase">
    <location>
        <begin position="1"/>
        <end position="203"/>
    </location>
</feature>
<feature type="binding site" evidence="1">
    <location>
        <begin position="14"/>
        <end position="21"/>
    </location>
    <ligand>
        <name>ATP</name>
        <dbReference type="ChEBI" id="CHEBI:30616"/>
    </ligand>
</feature>